<keyword id="KW-0119">Carbohydrate metabolism</keyword>
<keyword id="KW-0456">Lyase</keyword>
<comment type="function">
    <text evidence="1">Specifically catalyzes the cleavage of the D-lactyl ether substituent of MurNAc 6-phosphate, producing GlcNAc 6-phosphate and D-lactate. Together with AnmK, is also required for the utilization of anhydro-N-acetylmuramic acid (anhMurNAc) either imported from the medium or derived from its own cell wall murein, and thus plays a role in cell wall recycling.</text>
</comment>
<comment type="catalytic activity">
    <reaction evidence="1">
        <text>N-acetyl-D-muramate 6-phosphate + H2O = N-acetyl-D-glucosamine 6-phosphate + (R)-lactate</text>
        <dbReference type="Rhea" id="RHEA:26410"/>
        <dbReference type="ChEBI" id="CHEBI:15377"/>
        <dbReference type="ChEBI" id="CHEBI:16004"/>
        <dbReference type="ChEBI" id="CHEBI:57513"/>
        <dbReference type="ChEBI" id="CHEBI:58722"/>
        <dbReference type="EC" id="4.2.1.126"/>
    </reaction>
</comment>
<comment type="pathway">
    <text evidence="1">Amino-sugar metabolism; 1,6-anhydro-N-acetylmuramate degradation.</text>
</comment>
<comment type="pathway">
    <text evidence="1">Amino-sugar metabolism; N-acetylmuramate degradation.</text>
</comment>
<comment type="pathway">
    <text evidence="1">Cell wall biogenesis; peptidoglycan recycling.</text>
</comment>
<comment type="subunit">
    <text evidence="1">Homodimer.</text>
</comment>
<comment type="miscellaneous">
    <text evidence="1">A lyase-type mechanism (elimination/hydration) is suggested for the cleavage of the lactyl ether bond of MurNAc 6-phosphate, with the formation of an alpha,beta-unsaturated aldehyde intermediate with (E)-stereochemistry, followed by the syn addition of water to give product.</text>
</comment>
<comment type="similarity">
    <text evidence="1">Belongs to the GCKR-like family. MurNAc-6-P etherase subfamily.</text>
</comment>
<reference key="1">
    <citation type="journal article" date="2005" name="Proc. Natl. Acad. Sci. U.S.A.">
        <title>The psychrophilic lifestyle as revealed by the genome sequence of Colwellia psychrerythraea 34H through genomic and proteomic analyses.</title>
        <authorList>
            <person name="Methe B.A."/>
            <person name="Nelson K.E."/>
            <person name="Deming J.W."/>
            <person name="Momen B."/>
            <person name="Melamud E."/>
            <person name="Zhang X."/>
            <person name="Moult J."/>
            <person name="Madupu R."/>
            <person name="Nelson W.C."/>
            <person name="Dodson R.J."/>
            <person name="Brinkac L.M."/>
            <person name="Daugherty S.C."/>
            <person name="Durkin A.S."/>
            <person name="DeBoy R.T."/>
            <person name="Kolonay J.F."/>
            <person name="Sullivan S.A."/>
            <person name="Zhou L."/>
            <person name="Davidsen T.M."/>
            <person name="Wu M."/>
            <person name="Huston A.L."/>
            <person name="Lewis M."/>
            <person name="Weaver B."/>
            <person name="Weidman J.F."/>
            <person name="Khouri H."/>
            <person name="Utterback T.R."/>
            <person name="Feldblyum T.V."/>
            <person name="Fraser C.M."/>
        </authorList>
    </citation>
    <scope>NUCLEOTIDE SEQUENCE [LARGE SCALE GENOMIC DNA]</scope>
    <source>
        <strain>34H / ATCC BAA-681</strain>
    </source>
</reference>
<feature type="chain" id="PRO_0000249617" description="N-acetylmuramic acid 6-phosphate etherase">
    <location>
        <begin position="1"/>
        <end position="308"/>
    </location>
</feature>
<feature type="domain" description="SIS" evidence="1">
    <location>
        <begin position="63"/>
        <end position="226"/>
    </location>
</feature>
<feature type="active site" description="Proton donor" evidence="1">
    <location>
        <position position="91"/>
    </location>
</feature>
<feature type="active site" evidence="1">
    <location>
        <position position="122"/>
    </location>
</feature>
<gene>
    <name evidence="1" type="primary">murQ</name>
    <name type="ordered locus">CPS_2881</name>
</gene>
<name>MURQ_COLP3</name>
<protein>
    <recommendedName>
        <fullName evidence="1">N-acetylmuramic acid 6-phosphate etherase</fullName>
        <shortName evidence="1">MurNAc-6-P etherase</shortName>
        <ecNumber evidence="1">4.2.1.126</ecNumber>
    </recommendedName>
    <alternativeName>
        <fullName evidence="1">N-acetylmuramic acid 6-phosphate hydrolase</fullName>
    </alternativeName>
    <alternativeName>
        <fullName evidence="1">N-acetylmuramic acid 6-phosphate lyase</fullName>
    </alternativeName>
</protein>
<proteinExistence type="inferred from homology"/>
<organism>
    <name type="scientific">Colwellia psychrerythraea (strain 34H / ATCC BAA-681)</name>
    <name type="common">Vibrio psychroerythus</name>
    <dbReference type="NCBI Taxonomy" id="167879"/>
    <lineage>
        <taxon>Bacteria</taxon>
        <taxon>Pseudomonadati</taxon>
        <taxon>Pseudomonadota</taxon>
        <taxon>Gammaproteobacteria</taxon>
        <taxon>Alteromonadales</taxon>
        <taxon>Colwelliaceae</taxon>
        <taxon>Colwellia</taxon>
    </lineage>
</organism>
<sequence>MNTQAKLVNELKNITTEGQNPNTLDIDLLDSLGVLKKINTEDQKVASIVGLLLPEISQGVDLIVDAFACGGRLIYIGAGTSGRLGVLDAVECPPTFSVSSEQVIGILAGGAGAMYKAVEGAEDNRQLAIDDLKAINLSSKDIVVGIAASGRTPYVISGMAFAREQGAKVIGVSCSANSSYAQNCDINICAVVGAEVLTGSTRMKSGTAQKLILNMLSTASMIRSGKSYQNLMIDVNASNKKLYARAVRIVMQATECDFDTAEMALAQANNQTKLASLMVLTGLDSTQAKAALASNKGFLRKAVEQQGC</sequence>
<dbReference type="EC" id="4.2.1.126" evidence="1"/>
<dbReference type="EMBL" id="CP000083">
    <property type="protein sequence ID" value="AAZ28216.1"/>
    <property type="molecule type" value="Genomic_DNA"/>
</dbReference>
<dbReference type="RefSeq" id="WP_011043678.1">
    <property type="nucleotide sequence ID" value="NC_003910.7"/>
</dbReference>
<dbReference type="SMR" id="Q480D3"/>
<dbReference type="STRING" id="167879.CPS_2881"/>
<dbReference type="KEGG" id="cps:CPS_2881"/>
<dbReference type="HOGENOM" id="CLU_049049_1_1_6"/>
<dbReference type="UniPathway" id="UPA00342"/>
<dbReference type="UniPathway" id="UPA00343"/>
<dbReference type="UniPathway" id="UPA00544"/>
<dbReference type="Proteomes" id="UP000000547">
    <property type="component" value="Chromosome"/>
</dbReference>
<dbReference type="GO" id="GO:0097367">
    <property type="term" value="F:carbohydrate derivative binding"/>
    <property type="evidence" value="ECO:0007669"/>
    <property type="project" value="InterPro"/>
</dbReference>
<dbReference type="GO" id="GO:0016835">
    <property type="term" value="F:carbon-oxygen lyase activity"/>
    <property type="evidence" value="ECO:0007669"/>
    <property type="project" value="UniProtKB-UniRule"/>
</dbReference>
<dbReference type="GO" id="GO:0016803">
    <property type="term" value="F:ether hydrolase activity"/>
    <property type="evidence" value="ECO:0007669"/>
    <property type="project" value="TreeGrafter"/>
</dbReference>
<dbReference type="GO" id="GO:0097175">
    <property type="term" value="P:1,6-anhydro-N-acetyl-beta-muramic acid catabolic process"/>
    <property type="evidence" value="ECO:0007669"/>
    <property type="project" value="UniProtKB-UniRule"/>
</dbReference>
<dbReference type="GO" id="GO:0046348">
    <property type="term" value="P:amino sugar catabolic process"/>
    <property type="evidence" value="ECO:0007669"/>
    <property type="project" value="InterPro"/>
</dbReference>
<dbReference type="GO" id="GO:0097173">
    <property type="term" value="P:N-acetylmuramic acid catabolic process"/>
    <property type="evidence" value="ECO:0007669"/>
    <property type="project" value="UniProtKB-UniPathway"/>
</dbReference>
<dbReference type="GO" id="GO:0009254">
    <property type="term" value="P:peptidoglycan turnover"/>
    <property type="evidence" value="ECO:0007669"/>
    <property type="project" value="UniProtKB-UniRule"/>
</dbReference>
<dbReference type="CDD" id="cd05007">
    <property type="entry name" value="SIS_Etherase"/>
    <property type="match status" value="1"/>
</dbReference>
<dbReference type="FunFam" id="1.10.8.1080:FF:000001">
    <property type="entry name" value="N-acetylmuramic acid 6-phosphate etherase"/>
    <property type="match status" value="1"/>
</dbReference>
<dbReference type="FunFam" id="3.40.50.10490:FF:000014">
    <property type="entry name" value="N-acetylmuramic acid 6-phosphate etherase"/>
    <property type="match status" value="1"/>
</dbReference>
<dbReference type="Gene3D" id="1.10.8.1080">
    <property type="match status" value="1"/>
</dbReference>
<dbReference type="Gene3D" id="3.40.50.10490">
    <property type="entry name" value="Glucose-6-phosphate isomerase like protein, domain 1"/>
    <property type="match status" value="1"/>
</dbReference>
<dbReference type="HAMAP" id="MF_00068">
    <property type="entry name" value="MurQ"/>
    <property type="match status" value="1"/>
</dbReference>
<dbReference type="InterPro" id="IPR005488">
    <property type="entry name" value="Etherase_MurQ"/>
</dbReference>
<dbReference type="InterPro" id="IPR005486">
    <property type="entry name" value="Glucokinase_regulatory_CS"/>
</dbReference>
<dbReference type="InterPro" id="IPR040190">
    <property type="entry name" value="MURQ/GCKR"/>
</dbReference>
<dbReference type="InterPro" id="IPR001347">
    <property type="entry name" value="SIS_dom"/>
</dbReference>
<dbReference type="InterPro" id="IPR046348">
    <property type="entry name" value="SIS_dom_sf"/>
</dbReference>
<dbReference type="NCBIfam" id="TIGR00274">
    <property type="entry name" value="N-acetylmuramic acid 6-phosphate etherase"/>
    <property type="match status" value="1"/>
</dbReference>
<dbReference type="NCBIfam" id="NF003915">
    <property type="entry name" value="PRK05441.1"/>
    <property type="match status" value="1"/>
</dbReference>
<dbReference type="NCBIfam" id="NF009222">
    <property type="entry name" value="PRK12570.1"/>
    <property type="match status" value="1"/>
</dbReference>
<dbReference type="PANTHER" id="PTHR10088">
    <property type="entry name" value="GLUCOKINASE REGULATORY PROTEIN"/>
    <property type="match status" value="1"/>
</dbReference>
<dbReference type="PANTHER" id="PTHR10088:SF4">
    <property type="entry name" value="GLUCOKINASE REGULATORY PROTEIN"/>
    <property type="match status" value="1"/>
</dbReference>
<dbReference type="Pfam" id="PF20741">
    <property type="entry name" value="GKRP-like_C"/>
    <property type="match status" value="1"/>
</dbReference>
<dbReference type="Pfam" id="PF22645">
    <property type="entry name" value="GKRP_SIS_N"/>
    <property type="match status" value="1"/>
</dbReference>
<dbReference type="SUPFAM" id="SSF53697">
    <property type="entry name" value="SIS domain"/>
    <property type="match status" value="1"/>
</dbReference>
<dbReference type="PROSITE" id="PS01272">
    <property type="entry name" value="GCKR"/>
    <property type="match status" value="1"/>
</dbReference>
<dbReference type="PROSITE" id="PS51464">
    <property type="entry name" value="SIS"/>
    <property type="match status" value="1"/>
</dbReference>
<accession>Q480D3</accession>
<evidence type="ECO:0000255" key="1">
    <source>
        <dbReference type="HAMAP-Rule" id="MF_00068"/>
    </source>
</evidence>